<sequence length="242" mass="26225">MSGFFITATDTEVGKTVVAGAIAGVFRELGYNVGVYKPLQSGHVASNPEGDAARLKVLSGVPTQENEICPYSIEEPLAPRLAMKRAGRVVKLKEITDYYNELLKEFNSLFVEGAGGLAVPYTEDALVIDFAKELQLPLIVVARPTLGTVNHTVLTIAYAKAHGLTVAGVILSGCKECEMERVQENKEMIEELSGVPVLGLLPFFEGEFTKEEVLESAKEYIMISKLEEFIQNESNVAGAPSI</sequence>
<keyword id="KW-0067">ATP-binding</keyword>
<keyword id="KW-0093">Biotin biosynthesis</keyword>
<keyword id="KW-0963">Cytoplasm</keyword>
<keyword id="KW-0436">Ligase</keyword>
<keyword id="KW-0460">Magnesium</keyword>
<keyword id="KW-0479">Metal-binding</keyword>
<keyword id="KW-0547">Nucleotide-binding</keyword>
<comment type="function">
    <text evidence="1">Catalyzes a mechanistically unusual reaction, the ATP-dependent insertion of CO2 between the N7 and N8 nitrogen atoms of 7,8-diaminopelargonic acid (DAPA, also called 7,8-diammoniononanoate) to form a ureido ring.</text>
</comment>
<comment type="catalytic activity">
    <reaction evidence="1">
        <text>(7R,8S)-7,8-diammoniononanoate + CO2 + ATP = (4R,5S)-dethiobiotin + ADP + phosphate + 3 H(+)</text>
        <dbReference type="Rhea" id="RHEA:15805"/>
        <dbReference type="ChEBI" id="CHEBI:15378"/>
        <dbReference type="ChEBI" id="CHEBI:16526"/>
        <dbReference type="ChEBI" id="CHEBI:30616"/>
        <dbReference type="ChEBI" id="CHEBI:43474"/>
        <dbReference type="ChEBI" id="CHEBI:149469"/>
        <dbReference type="ChEBI" id="CHEBI:149473"/>
        <dbReference type="ChEBI" id="CHEBI:456216"/>
        <dbReference type="EC" id="6.3.3.3"/>
    </reaction>
</comment>
<comment type="cofactor">
    <cofactor evidence="1">
        <name>Mg(2+)</name>
        <dbReference type="ChEBI" id="CHEBI:18420"/>
    </cofactor>
</comment>
<comment type="pathway">
    <text evidence="1">Cofactor biosynthesis; biotin biosynthesis; biotin from 7,8-diaminononanoate: step 1/2.</text>
</comment>
<comment type="subunit">
    <text evidence="1">Homodimer.</text>
</comment>
<comment type="subcellular location">
    <subcellularLocation>
        <location evidence="1">Cytoplasm</location>
    </subcellularLocation>
</comment>
<comment type="similarity">
    <text evidence="1">Belongs to the dethiobiotin synthetase family.</text>
</comment>
<gene>
    <name evidence="1" type="primary">bioD</name>
    <name type="ordered locus">BCG9842_B1008</name>
</gene>
<name>BIOD_BACC2</name>
<feature type="chain" id="PRO_1000119857" description="ATP-dependent dethiobiotin synthetase BioD">
    <location>
        <begin position="1"/>
        <end position="242"/>
    </location>
</feature>
<feature type="active site" evidence="1">
    <location>
        <position position="37"/>
    </location>
</feature>
<feature type="binding site" evidence="1">
    <location>
        <begin position="12"/>
        <end position="17"/>
    </location>
    <ligand>
        <name>ATP</name>
        <dbReference type="ChEBI" id="CHEBI:30616"/>
    </ligand>
</feature>
<feature type="binding site" evidence="1">
    <location>
        <position position="16"/>
    </location>
    <ligand>
        <name>Mg(2+)</name>
        <dbReference type="ChEBI" id="CHEBI:18420"/>
    </ligand>
</feature>
<feature type="binding site" evidence="1">
    <location>
        <position position="41"/>
    </location>
    <ligand>
        <name>substrate</name>
    </ligand>
</feature>
<feature type="binding site" evidence="1">
    <location>
        <position position="51"/>
    </location>
    <ligand>
        <name>ATP</name>
        <dbReference type="ChEBI" id="CHEBI:30616"/>
    </ligand>
</feature>
<feature type="binding site" evidence="1">
    <location>
        <position position="51"/>
    </location>
    <ligand>
        <name>Mg(2+)</name>
        <dbReference type="ChEBI" id="CHEBI:18420"/>
    </ligand>
</feature>
<feature type="binding site" evidence="1">
    <location>
        <begin position="112"/>
        <end position="115"/>
    </location>
    <ligand>
        <name>ATP</name>
        <dbReference type="ChEBI" id="CHEBI:30616"/>
    </ligand>
</feature>
<feature type="binding site" evidence="1">
    <location>
        <position position="112"/>
    </location>
    <ligand>
        <name>Mg(2+)</name>
        <dbReference type="ChEBI" id="CHEBI:18420"/>
    </ligand>
</feature>
<reference key="1">
    <citation type="submission" date="2008-10" db="EMBL/GenBank/DDBJ databases">
        <title>Genome sequence of Bacillus cereus G9842.</title>
        <authorList>
            <person name="Dodson R.J."/>
            <person name="Durkin A.S."/>
            <person name="Rosovitz M.J."/>
            <person name="Rasko D.A."/>
            <person name="Hoffmaster A."/>
            <person name="Ravel J."/>
            <person name="Sutton G."/>
        </authorList>
    </citation>
    <scope>NUCLEOTIDE SEQUENCE [LARGE SCALE GENOMIC DNA]</scope>
    <source>
        <strain>G9842</strain>
    </source>
</reference>
<protein>
    <recommendedName>
        <fullName evidence="1">ATP-dependent dethiobiotin synthetase BioD</fullName>
        <ecNumber evidence="1">6.3.3.3</ecNumber>
    </recommendedName>
    <alternativeName>
        <fullName evidence="1">DTB synthetase</fullName>
        <shortName evidence="1">DTBS</shortName>
    </alternativeName>
    <alternativeName>
        <fullName evidence="1">Dethiobiotin synthase</fullName>
    </alternativeName>
</protein>
<proteinExistence type="inferred from homology"/>
<dbReference type="EC" id="6.3.3.3" evidence="1"/>
<dbReference type="EMBL" id="CP001186">
    <property type="protein sequence ID" value="ACK97234.1"/>
    <property type="molecule type" value="Genomic_DNA"/>
</dbReference>
<dbReference type="RefSeq" id="WP_000012478.1">
    <property type="nucleotide sequence ID" value="NC_011772.1"/>
</dbReference>
<dbReference type="SMR" id="B7IWN2"/>
<dbReference type="KEGG" id="bcg:BCG9842_B1008"/>
<dbReference type="HOGENOM" id="CLU_072551_3_1_9"/>
<dbReference type="UniPathway" id="UPA00078">
    <property type="reaction ID" value="UER00161"/>
</dbReference>
<dbReference type="Proteomes" id="UP000006744">
    <property type="component" value="Chromosome"/>
</dbReference>
<dbReference type="GO" id="GO:0005829">
    <property type="term" value="C:cytosol"/>
    <property type="evidence" value="ECO:0007669"/>
    <property type="project" value="TreeGrafter"/>
</dbReference>
<dbReference type="GO" id="GO:0005524">
    <property type="term" value="F:ATP binding"/>
    <property type="evidence" value="ECO:0007669"/>
    <property type="project" value="UniProtKB-UniRule"/>
</dbReference>
<dbReference type="GO" id="GO:0004141">
    <property type="term" value="F:dethiobiotin synthase activity"/>
    <property type="evidence" value="ECO:0007669"/>
    <property type="project" value="UniProtKB-UniRule"/>
</dbReference>
<dbReference type="GO" id="GO:0000287">
    <property type="term" value="F:magnesium ion binding"/>
    <property type="evidence" value="ECO:0007669"/>
    <property type="project" value="UniProtKB-UniRule"/>
</dbReference>
<dbReference type="GO" id="GO:0009102">
    <property type="term" value="P:biotin biosynthetic process"/>
    <property type="evidence" value="ECO:0007669"/>
    <property type="project" value="UniProtKB-UniRule"/>
</dbReference>
<dbReference type="CDD" id="cd03109">
    <property type="entry name" value="DTBS"/>
    <property type="match status" value="1"/>
</dbReference>
<dbReference type="FunFam" id="3.40.50.300:FF:001212">
    <property type="entry name" value="ATP-dependent dethiobiotin synthetase BioD"/>
    <property type="match status" value="1"/>
</dbReference>
<dbReference type="Gene3D" id="3.40.50.300">
    <property type="entry name" value="P-loop containing nucleotide triphosphate hydrolases"/>
    <property type="match status" value="1"/>
</dbReference>
<dbReference type="HAMAP" id="MF_00336">
    <property type="entry name" value="BioD"/>
    <property type="match status" value="1"/>
</dbReference>
<dbReference type="InterPro" id="IPR004472">
    <property type="entry name" value="DTB_synth_BioD"/>
</dbReference>
<dbReference type="InterPro" id="IPR027417">
    <property type="entry name" value="P-loop_NTPase"/>
</dbReference>
<dbReference type="NCBIfam" id="TIGR00347">
    <property type="entry name" value="bioD"/>
    <property type="match status" value="1"/>
</dbReference>
<dbReference type="PANTHER" id="PTHR43210:SF2">
    <property type="entry name" value="ATP-DEPENDENT DETHIOBIOTIN SYNTHETASE BIOD 2"/>
    <property type="match status" value="1"/>
</dbReference>
<dbReference type="PANTHER" id="PTHR43210">
    <property type="entry name" value="DETHIOBIOTIN SYNTHETASE"/>
    <property type="match status" value="1"/>
</dbReference>
<dbReference type="Pfam" id="PF13500">
    <property type="entry name" value="AAA_26"/>
    <property type="match status" value="1"/>
</dbReference>
<dbReference type="PIRSF" id="PIRSF006755">
    <property type="entry name" value="DTB_synth"/>
    <property type="match status" value="1"/>
</dbReference>
<dbReference type="SUPFAM" id="SSF52540">
    <property type="entry name" value="P-loop containing nucleoside triphosphate hydrolases"/>
    <property type="match status" value="1"/>
</dbReference>
<organism>
    <name type="scientific">Bacillus cereus (strain G9842)</name>
    <dbReference type="NCBI Taxonomy" id="405531"/>
    <lineage>
        <taxon>Bacteria</taxon>
        <taxon>Bacillati</taxon>
        <taxon>Bacillota</taxon>
        <taxon>Bacilli</taxon>
        <taxon>Bacillales</taxon>
        <taxon>Bacillaceae</taxon>
        <taxon>Bacillus</taxon>
        <taxon>Bacillus cereus group</taxon>
    </lineage>
</organism>
<accession>B7IWN2</accession>
<evidence type="ECO:0000255" key="1">
    <source>
        <dbReference type="HAMAP-Rule" id="MF_00336"/>
    </source>
</evidence>